<keyword id="KW-0012">Acyltransferase</keyword>
<keyword id="KW-1003">Cell membrane</keyword>
<keyword id="KW-0472">Membrane</keyword>
<keyword id="KW-1185">Reference proteome</keyword>
<keyword id="KW-0808">Transferase</keyword>
<keyword id="KW-0812">Transmembrane</keyword>
<keyword id="KW-1133">Transmembrane helix</keyword>
<evidence type="ECO:0000255" key="1">
    <source>
        <dbReference type="HAMAP-Rule" id="MF_01148"/>
    </source>
</evidence>
<evidence type="ECO:0000256" key="2">
    <source>
        <dbReference type="SAM" id="MobiDB-lite"/>
    </source>
</evidence>
<evidence type="ECO:0000269" key="3">
    <source>
    </source>
</evidence>
<evidence type="ECO:0000269" key="4">
    <source>
    </source>
</evidence>
<evidence type="ECO:0000269" key="5">
    <source>
    </source>
</evidence>
<evidence type="ECO:0000303" key="6">
    <source>
    </source>
</evidence>
<evidence type="ECO:0000305" key="7"/>
<evidence type="ECO:0000305" key="8">
    <source>
    </source>
</evidence>
<evidence type="ECO:0000305" key="9">
    <source>
    </source>
</evidence>
<protein>
    <recommendedName>
        <fullName evidence="1">Apolipoprotein N-acyltransferase</fullName>
        <shortName evidence="1">ALP N-acyltransferase</shortName>
        <ecNumber evidence="1">2.3.1.269</ecNumber>
    </recommendedName>
    <alternativeName>
        <fullName>LntMs</fullName>
    </alternativeName>
</protein>
<name>LNT_MYCS2</name>
<reference key="1">
    <citation type="submission" date="2006-10" db="EMBL/GenBank/DDBJ databases">
        <authorList>
            <person name="Fleischmann R.D."/>
            <person name="Dodson R.J."/>
            <person name="Haft D.H."/>
            <person name="Merkel J.S."/>
            <person name="Nelson W.C."/>
            <person name="Fraser C.M."/>
        </authorList>
    </citation>
    <scope>NUCLEOTIDE SEQUENCE [LARGE SCALE GENOMIC DNA]</scope>
    <source>
        <strain>ATCC 700084 / mc(2)155</strain>
    </source>
</reference>
<reference key="2">
    <citation type="journal article" date="2003" name="J. Biol. Chem.">
        <title>In vivo interaction between the polyprenol phosphate mannose synthase Ppm1 and the integral membrane protein Ppm2 from Mycobacterium smegmatis revealed by a bacterial two-hybrid system.</title>
        <authorList>
            <person name="Baulard A.R."/>
            <person name="Gurcha S.S."/>
            <person name="Engohang-Ndong J."/>
            <person name="Gouffi K."/>
            <person name="Locht C."/>
            <person name="Besra G.S."/>
        </authorList>
    </citation>
    <scope>STIMULATES PPM SYNTHASE</scope>
    <scope>SUBUNIT</scope>
    <scope>SUBCELLULAR LOCATION</scope>
    <scope>TOPOLOGY</scope>
    <scope>EXPRESSION IN E.COLI</scope>
</reference>
<reference key="3">
    <citation type="journal article" date="2009" name="J. Biol. Chem.">
        <title>Identification of apolipoprotein N-acyltransferase (Lnt) in mycobacteria.</title>
        <authorList>
            <person name="Tschumi A."/>
            <person name="Nai C."/>
            <person name="Auchli Y."/>
            <person name="Hunziker P."/>
            <person name="Gehrig P."/>
            <person name="Keller P."/>
            <person name="Grau T."/>
            <person name="Sander P."/>
        </authorList>
    </citation>
    <scope>FUNCTION AS AN N-ACYLTRANSFERASE</scope>
    <scope>DISRUPTION PHENOTYPE</scope>
</reference>
<reference key="4">
    <citation type="journal article" date="2010" name="Biochem. Biophys. Res. Commun.">
        <title>Cloning, expression and characterization of Mycobacterium tuberculosis lipoprotein LprF.</title>
        <authorList>
            <person name="Bruelle J.K."/>
            <person name="Grau T."/>
            <person name="Tschumi A."/>
            <person name="Auchli Y."/>
            <person name="Burri R."/>
            <person name="Polsfuss S."/>
            <person name="Keller P.M."/>
            <person name="Hunziker P."/>
            <person name="Sander P."/>
        </authorList>
    </citation>
    <scope>DISRUPTION PHENOTYPE</scope>
</reference>
<comment type="function">
    <text evidence="3 4">Catalyzes the phospholipid dependent N-acylation of the N-terminal cysteine of apolipoprotein, the last step in lipoprotein maturation. Can transfer a number of fatty acids (C16 and C19, palmitic and probably tuberculostearic acids respectively are shown) (PubMed:19661058). Enhances the polyprenol monophosphomannose (PPM) synthase activity of Ppm1 (AC A0QZ12) without itself having PPM synthase catalytic activity (PubMed:12427759).</text>
</comment>
<comment type="catalytic activity">
    <reaction evidence="1">
        <text>N-terminal S-1,2-diacyl-sn-glyceryl-L-cysteinyl-[lipoprotein] + a glycerophospholipid = N-acyl-S-1,2-diacyl-sn-glyceryl-L-cysteinyl-[lipoprotein] + a 2-acyl-sn-glycero-3-phospholipid + H(+)</text>
        <dbReference type="Rhea" id="RHEA:48228"/>
        <dbReference type="Rhea" id="RHEA-COMP:14681"/>
        <dbReference type="Rhea" id="RHEA-COMP:14684"/>
        <dbReference type="ChEBI" id="CHEBI:15378"/>
        <dbReference type="ChEBI" id="CHEBI:136912"/>
        <dbReference type="ChEBI" id="CHEBI:140656"/>
        <dbReference type="ChEBI" id="CHEBI:140657"/>
        <dbReference type="ChEBI" id="CHEBI:140660"/>
        <dbReference type="EC" id="2.3.1.269"/>
    </reaction>
</comment>
<comment type="pathway">
    <text evidence="1">Protein modification; lipoprotein biosynthesis (N-acyl transfer).</text>
</comment>
<comment type="subunit">
    <text evidence="3">Interacts with Ppm1 (AC A0QZ12) upon coexpression in E.coli, which increases the PPM synthase activity of Ppm1.</text>
</comment>
<comment type="subcellular location">
    <subcellularLocation>
        <location evidence="1 3">Cell membrane</location>
        <topology evidence="1 3">Multi-pass membrane protein</topology>
    </subcellularLocation>
</comment>
<comment type="disruption phenotype">
    <text evidence="4 5">Not essential. Loss of N-acylation of apolipoproteins.</text>
</comment>
<comment type="miscellaneous">
    <text evidence="8">In a number of other Mycobacteria, including M.bovis and M.tuberculosis, this protein is the second domain in a 2 domain protein.</text>
</comment>
<comment type="similarity">
    <text evidence="1">Belongs to the CN hydrolase family. Apolipoprotein N-acyltransferase subfamily.</text>
</comment>
<comment type="sequence caution" evidence="7">
    <conflict type="erroneous initiation">
        <sequence resource="EMBL-CDS" id="ABK75562"/>
    </conflict>
    <text>Extended N-terminus.</text>
</comment>
<sequence>MIPAVTDDDPLEDPLDDDVAPGLDDAEPEPEPRDEHDEPSRPATGSRIGGWVARRGSRFGKGVLDRCAPLSAAIGGGLALWLSFPPIGWWFTAFPGLALLGWVLTRTATTKAGGFGYGVLFGLAFYVPLLPWISGLVGAVPWLALAFAESLFCGLFGLGAVVVVRLPGWPLWFATLWVAAEWAKSTFPFGGFPWGASSYGQTNGPLLALARIGGAPLVSFAVALIGFSLTLLTAQIVWWWRHGHKPGVPAPAVMLPGVAIAASLLVTALVWPQVRQSGTGAGDDTAVTVAAVQGNVPRLGLEFNAQRRAVLDNHVKETLRLADDVKAGRAAQPMFVIWPENSSDIDPLLNADASAQITTAAEAIDAPILVGGVVRADGYTPDNPVANNTVIVWEPTDGPGERHDKQIVQPFGEYLPWRGFFKHLSSYADRAGYFVPGTGTGVVHAAGVPIGITTCWEVIFDRAARESVLNGAQVLAVPSNNATFDEAMSAQQLAFGKLRAVEHDRYVVVAGTTGISAVIAPDGHEISRTEWFQPAYLDNQIRLKTDLTPATKWGPIVQAVLVIAGVAVLLIAILHNGRFAPRMLRRRSATTVKR</sequence>
<dbReference type="EC" id="2.3.1.269" evidence="1"/>
<dbReference type="EMBL" id="CP000480">
    <property type="protein sequence ID" value="ABK75562.1"/>
    <property type="status" value="ALT_INIT"/>
    <property type="molecule type" value="Genomic_DNA"/>
</dbReference>
<dbReference type="RefSeq" id="YP_888151.1">
    <property type="nucleotide sequence ID" value="NC_008596.1"/>
</dbReference>
<dbReference type="SMR" id="A0QZ13"/>
<dbReference type="STRING" id="246196.MSMEG_3860"/>
<dbReference type="PaxDb" id="246196-MSMEI_3770"/>
<dbReference type="KEGG" id="msm:MSMEG_3860"/>
<dbReference type="PATRIC" id="fig|246196.19.peg.3799"/>
<dbReference type="eggNOG" id="COG0815">
    <property type="taxonomic scope" value="Bacteria"/>
</dbReference>
<dbReference type="OrthoDB" id="9804277at2"/>
<dbReference type="UniPathway" id="UPA00666"/>
<dbReference type="Proteomes" id="UP000000757">
    <property type="component" value="Chromosome"/>
</dbReference>
<dbReference type="GO" id="GO:0005886">
    <property type="term" value="C:plasma membrane"/>
    <property type="evidence" value="ECO:0007669"/>
    <property type="project" value="UniProtKB-SubCell"/>
</dbReference>
<dbReference type="GO" id="GO:0016410">
    <property type="term" value="F:N-acyltransferase activity"/>
    <property type="evidence" value="ECO:0007669"/>
    <property type="project" value="UniProtKB-UniRule"/>
</dbReference>
<dbReference type="GO" id="GO:0042158">
    <property type="term" value="P:lipoprotein biosynthetic process"/>
    <property type="evidence" value="ECO:0007669"/>
    <property type="project" value="UniProtKB-UniRule"/>
</dbReference>
<dbReference type="CDD" id="cd07571">
    <property type="entry name" value="ALP_N-acyl_transferase"/>
    <property type="match status" value="1"/>
</dbReference>
<dbReference type="Gene3D" id="3.60.110.10">
    <property type="entry name" value="Carbon-nitrogen hydrolase"/>
    <property type="match status" value="1"/>
</dbReference>
<dbReference type="HAMAP" id="MF_01148">
    <property type="entry name" value="Lnt"/>
    <property type="match status" value="1"/>
</dbReference>
<dbReference type="InterPro" id="IPR004563">
    <property type="entry name" value="Apolipo_AcylTrfase"/>
</dbReference>
<dbReference type="InterPro" id="IPR003010">
    <property type="entry name" value="C-N_Hydrolase"/>
</dbReference>
<dbReference type="InterPro" id="IPR036526">
    <property type="entry name" value="C-N_Hydrolase_sf"/>
</dbReference>
<dbReference type="InterPro" id="IPR045378">
    <property type="entry name" value="LNT_N"/>
</dbReference>
<dbReference type="NCBIfam" id="TIGR00546">
    <property type="entry name" value="lnt"/>
    <property type="match status" value="1"/>
</dbReference>
<dbReference type="PANTHER" id="PTHR38686">
    <property type="entry name" value="APOLIPOPROTEIN N-ACYLTRANSFERASE"/>
    <property type="match status" value="1"/>
</dbReference>
<dbReference type="PANTHER" id="PTHR38686:SF1">
    <property type="entry name" value="APOLIPOPROTEIN N-ACYLTRANSFERASE"/>
    <property type="match status" value="1"/>
</dbReference>
<dbReference type="Pfam" id="PF00795">
    <property type="entry name" value="CN_hydrolase"/>
    <property type="match status" value="1"/>
</dbReference>
<dbReference type="Pfam" id="PF20154">
    <property type="entry name" value="LNT_N"/>
    <property type="match status" value="1"/>
</dbReference>
<dbReference type="SUPFAM" id="SSF56317">
    <property type="entry name" value="Carbon-nitrogen hydrolase"/>
    <property type="match status" value="1"/>
</dbReference>
<dbReference type="PROSITE" id="PS50263">
    <property type="entry name" value="CN_HYDROLASE"/>
    <property type="match status" value="1"/>
</dbReference>
<organism>
    <name type="scientific">Mycolicibacterium smegmatis (strain ATCC 700084 / mc(2)155)</name>
    <name type="common">Mycobacterium smegmatis</name>
    <dbReference type="NCBI Taxonomy" id="246196"/>
    <lineage>
        <taxon>Bacteria</taxon>
        <taxon>Bacillati</taxon>
        <taxon>Actinomycetota</taxon>
        <taxon>Actinomycetes</taxon>
        <taxon>Mycobacteriales</taxon>
        <taxon>Mycobacteriaceae</taxon>
        <taxon>Mycolicibacterium</taxon>
    </lineage>
</organism>
<proteinExistence type="evidence at protein level"/>
<gene>
    <name evidence="1 9" type="primary">lnt</name>
    <name evidence="6" type="synonym">ppm2</name>
    <name type="ordered locus">MSMEG_3860</name>
</gene>
<accession>A0QZ13</accession>
<feature type="chain" id="PRO_0000434585" description="Apolipoprotein N-acyltransferase">
    <location>
        <begin position="1"/>
        <end position="594"/>
    </location>
</feature>
<feature type="topological domain" description="Cytoplasmic" evidence="7">
    <location>
        <begin position="1"/>
        <end position="67"/>
    </location>
</feature>
<feature type="transmembrane region" description="Helical" evidence="8">
    <location>
        <begin position="68"/>
        <end position="87"/>
    </location>
</feature>
<feature type="topological domain" description="Extracellular" evidence="7">
    <location>
        <begin position="88"/>
        <end position="116"/>
    </location>
</feature>
<feature type="transmembrane region" description="Helical" evidence="8">
    <location>
        <begin position="117"/>
        <end position="134"/>
    </location>
</feature>
<feature type="topological domain" description="Cytoplasmic" evidence="7">
    <location>
        <begin position="135"/>
        <end position="138"/>
    </location>
</feature>
<feature type="transmembrane region" description="Helical" evidence="8">
    <location>
        <begin position="139"/>
        <end position="160"/>
    </location>
</feature>
<feature type="topological domain" description="Extracellular" evidence="7">
    <location>
        <begin position="161"/>
        <end position="221"/>
    </location>
</feature>
<feature type="transmembrane region" description="Helical" evidence="8">
    <location>
        <begin position="222"/>
        <end position="239"/>
    </location>
</feature>
<feature type="topological domain" description="Cytoplasmic" evidence="7">
    <location>
        <begin position="240"/>
        <end position="251"/>
    </location>
</feature>
<feature type="transmembrane region" description="Helical" evidence="8">
    <location>
        <begin position="252"/>
        <end position="269"/>
    </location>
</feature>
<feature type="topological domain" description="Extracellular" evidence="3">
    <location>
        <begin position="270"/>
        <end position="554"/>
    </location>
</feature>
<feature type="transmembrane region" description="Helical" evidence="8">
    <location>
        <begin position="555"/>
        <end position="572"/>
    </location>
</feature>
<feature type="topological domain" description="Cytoplasmic" evidence="7">
    <location>
        <begin position="573"/>
        <end position="594"/>
    </location>
</feature>
<feature type="domain" description="CN hydrolase" evidence="1">
    <location>
        <begin position="287"/>
        <end position="543"/>
    </location>
</feature>
<feature type="region of interest" description="Disordered" evidence="2">
    <location>
        <begin position="1"/>
        <end position="48"/>
    </location>
</feature>
<feature type="compositionally biased region" description="Acidic residues" evidence="2">
    <location>
        <begin position="1"/>
        <end position="29"/>
    </location>
</feature>
<feature type="compositionally biased region" description="Basic and acidic residues" evidence="2">
    <location>
        <begin position="30"/>
        <end position="40"/>
    </location>
</feature>
<feature type="active site" description="Proton acceptor" evidence="1">
    <location>
        <position position="340"/>
    </location>
</feature>
<feature type="active site" evidence="1">
    <location>
        <position position="405"/>
    </location>
</feature>
<feature type="active site" description="Nucleophile" evidence="1">
    <location>
        <position position="455"/>
    </location>
</feature>